<comment type="function">
    <molecule>Sterol regulatory element-binding protein 2</molecule>
    <text evidence="2">Precursor of the transcription factor form (Processed sterol regulatory element-binding protein 2), which is embedded in the endoplasmic reticulum membrane. Low sterol concentrations promote processing of this form, releasing the transcription factor form that translocates into the nucleus and activates transcription of genes involved in cholesterol biosynthesis.</text>
</comment>
<comment type="function">
    <molecule>Processed sterol regulatory element-binding protein 2</molecule>
    <text evidence="2 7">Key transcription factor that regulates expression of genes involved in cholesterol biosynthesis. Binds to the sterol regulatory element 1 (SRE-1) (5'-ATCACCCCAC-3'). Has dual sequence specificity binding to both an E-box motif (5'-ATCACGTGA-3') and to SRE-1 (5'-ATCACCCCAC-3'). Regulates transcription of genes related to cholesterol synthesis pathway (By similarity). Activated by mediated cholesterol efflux, transactivates NOTCH and promotes hematopoietic stem and progenitor cell emergence (PubMed:30705153).</text>
</comment>
<comment type="subunit">
    <molecule>Sterol regulatory element-binding protein 2</molecule>
    <text evidence="2">Forms a tight complex with scap, the SCAP-SREBP complex, in the endoplasmic reticulum membrane.</text>
</comment>
<comment type="subunit">
    <molecule>Processed sterol regulatory element-binding protein 2</molecule>
    <text evidence="3">Homodimer; efficient DNA binding of the soluble transcription factor fragment requires dimerization with another bHLH protein.</text>
</comment>
<comment type="subcellular location">
    <molecule>Sterol regulatory element-binding protein 2</molecule>
    <subcellularLocation>
        <location evidence="2">Endoplasmic reticulum membrane</location>
        <topology evidence="4">Multi-pass membrane protein</topology>
    </subcellularLocation>
    <subcellularLocation>
        <location evidence="2">Golgi apparatus membrane</location>
        <topology evidence="4">Multi-pass membrane protein</topology>
    </subcellularLocation>
    <subcellularLocation>
        <location evidence="2">Cytoplasmic vesicle</location>
        <location evidence="2">COPII-coated vesicle membrane</location>
        <topology evidence="4">Multi-pass membrane protein</topology>
    </subcellularLocation>
    <text evidence="2">At high sterol concentrations, the SCAP-SREBP is retained in the endoplasmic reticulum. Low sterol concentrations promote recruitment into COPII-coated vesicles and transport of the SCAP-SREBP to the Golgi, where it is processed.</text>
</comment>
<comment type="subcellular location">
    <molecule>Processed sterol regulatory element-binding protein 2</molecule>
    <subcellularLocation>
        <location evidence="2">Nucleus</location>
    </subcellularLocation>
</comment>
<comment type="PTM">
    <molecule>Sterol regulatory element-binding protein 2</molecule>
    <text evidence="2 7">Processed in the Golgi apparatus, releasing the protein from the membrane (PubMed:30705153). At low cholesterol the SCAP-SREBP complex is recruited into COPII vesicles for export from the endoplasmic reticulum (By similarity). In the Golgi, complex SREBPs are cleaved sequentially by site-1 (mbtps1, S1P) and site-2 (mbtps2, S2P) protease. The first cleavage by site-1 protease occurs within the luminal loop, the second cleavage by site-2 protease occurs within the first transmembrane domain, releasing the transcription factor from the Golgi membrane (By similarity).</text>
</comment>
<comment type="similarity">
    <text evidence="9">Belongs to the SREBP family.</text>
</comment>
<evidence type="ECO:0000250" key="1">
    <source>
        <dbReference type="UniProtKB" id="P36956"/>
    </source>
</evidence>
<evidence type="ECO:0000250" key="2">
    <source>
        <dbReference type="UniProtKB" id="Q12772"/>
    </source>
</evidence>
<evidence type="ECO:0000250" key="3">
    <source>
        <dbReference type="UniProtKB" id="Q3U1N2"/>
    </source>
</evidence>
<evidence type="ECO:0000255" key="4"/>
<evidence type="ECO:0000255" key="5">
    <source>
        <dbReference type="PROSITE-ProRule" id="PRU00981"/>
    </source>
</evidence>
<evidence type="ECO:0000256" key="6">
    <source>
        <dbReference type="SAM" id="MobiDB-lite"/>
    </source>
</evidence>
<evidence type="ECO:0000269" key="7">
    <source>
    </source>
</evidence>
<evidence type="ECO:0000303" key="8">
    <source>
    </source>
</evidence>
<evidence type="ECO:0000305" key="9"/>
<evidence type="ECO:0000312" key="10">
    <source>
        <dbReference type="EMBL" id="AAI33738.1"/>
    </source>
</evidence>
<gene>
    <name evidence="2" type="primary">srebf2</name>
    <name evidence="8" type="synonym">SREBP2</name>
    <name type="ORF">zgc:158371</name>
</gene>
<dbReference type="EMBL" id="BC133737">
    <property type="protein sequence ID" value="AAI33738.1"/>
    <property type="molecule type" value="mRNA"/>
</dbReference>
<dbReference type="RefSeq" id="NP_001082935.1">
    <property type="nucleotide sequence ID" value="NM_001089466.1"/>
</dbReference>
<dbReference type="SMR" id="A3KNA7"/>
<dbReference type="FunCoup" id="A3KNA7">
    <property type="interactions" value="2118"/>
</dbReference>
<dbReference type="STRING" id="7955.ENSDARP00000087122"/>
<dbReference type="PaxDb" id="7955-ENSDARP00000087122"/>
<dbReference type="GeneID" id="100037309"/>
<dbReference type="KEGG" id="dre:100037309"/>
<dbReference type="AGR" id="ZFIN:ZDB-GENE-070410-8"/>
<dbReference type="CTD" id="6721"/>
<dbReference type="ZFIN" id="ZDB-GENE-070410-8">
    <property type="gene designation" value="srebf2"/>
</dbReference>
<dbReference type="eggNOG" id="KOG2588">
    <property type="taxonomic scope" value="Eukaryota"/>
</dbReference>
<dbReference type="InParanoid" id="A3KNA7"/>
<dbReference type="OrthoDB" id="2133190at2759"/>
<dbReference type="PhylomeDB" id="A3KNA7"/>
<dbReference type="Reactome" id="R-DRE-1655829">
    <property type="pathway name" value="Regulation of cholesterol biosynthesis by SREBP (SREBF)"/>
</dbReference>
<dbReference type="Reactome" id="R-DRE-191273">
    <property type="pathway name" value="Cholesterol biosynthesis"/>
</dbReference>
<dbReference type="PRO" id="PR:A3KNA7"/>
<dbReference type="Proteomes" id="UP000000437">
    <property type="component" value="Chromosome 3"/>
</dbReference>
<dbReference type="GO" id="GO:0005789">
    <property type="term" value="C:endoplasmic reticulum membrane"/>
    <property type="evidence" value="ECO:0007669"/>
    <property type="project" value="UniProtKB-SubCell"/>
</dbReference>
<dbReference type="GO" id="GO:0012507">
    <property type="term" value="C:ER to Golgi transport vesicle membrane"/>
    <property type="evidence" value="ECO:0007669"/>
    <property type="project" value="UniProtKB-SubCell"/>
</dbReference>
<dbReference type="GO" id="GO:0000139">
    <property type="term" value="C:Golgi membrane"/>
    <property type="evidence" value="ECO:0007669"/>
    <property type="project" value="UniProtKB-SubCell"/>
</dbReference>
<dbReference type="GO" id="GO:0005634">
    <property type="term" value="C:nucleus"/>
    <property type="evidence" value="ECO:0000318"/>
    <property type="project" value="GO_Central"/>
</dbReference>
<dbReference type="GO" id="GO:0000981">
    <property type="term" value="F:DNA-binding transcription factor activity, RNA polymerase II-specific"/>
    <property type="evidence" value="ECO:0000318"/>
    <property type="project" value="GO_Central"/>
</dbReference>
<dbReference type="GO" id="GO:0046983">
    <property type="term" value="F:protein dimerization activity"/>
    <property type="evidence" value="ECO:0007669"/>
    <property type="project" value="InterPro"/>
</dbReference>
<dbReference type="GO" id="GO:0000978">
    <property type="term" value="F:RNA polymerase II cis-regulatory region sequence-specific DNA binding"/>
    <property type="evidence" value="ECO:0000318"/>
    <property type="project" value="GO_Central"/>
</dbReference>
<dbReference type="GO" id="GO:0008203">
    <property type="term" value="P:cholesterol metabolic process"/>
    <property type="evidence" value="ECO:0007669"/>
    <property type="project" value="UniProtKB-KW"/>
</dbReference>
<dbReference type="GO" id="GO:0001889">
    <property type="term" value="P:liver development"/>
    <property type="evidence" value="ECO:0000316"/>
    <property type="project" value="ZFIN"/>
</dbReference>
<dbReference type="GO" id="GO:0010886">
    <property type="term" value="P:positive regulation of cholesterol storage"/>
    <property type="evidence" value="ECO:0000318"/>
    <property type="project" value="GO_Central"/>
</dbReference>
<dbReference type="GO" id="GO:0045944">
    <property type="term" value="P:positive regulation of transcription by RNA polymerase II"/>
    <property type="evidence" value="ECO:0000318"/>
    <property type="project" value="GO_Central"/>
</dbReference>
<dbReference type="GO" id="GO:0008593">
    <property type="term" value="P:regulation of Notch signaling pathway"/>
    <property type="evidence" value="ECO:0000315"/>
    <property type="project" value="UniProtKB"/>
</dbReference>
<dbReference type="CDD" id="cd18922">
    <property type="entry name" value="bHLHzip_SREBP2"/>
    <property type="match status" value="1"/>
</dbReference>
<dbReference type="FunFam" id="4.10.280.10:FF:000016">
    <property type="entry name" value="Sterol regulatory element-binding transcription factor 1"/>
    <property type="match status" value="1"/>
</dbReference>
<dbReference type="Gene3D" id="4.10.280.10">
    <property type="entry name" value="Helix-loop-helix DNA-binding domain"/>
    <property type="match status" value="1"/>
</dbReference>
<dbReference type="InterPro" id="IPR011598">
    <property type="entry name" value="bHLH_dom"/>
</dbReference>
<dbReference type="InterPro" id="IPR036638">
    <property type="entry name" value="HLH_DNA-bd_sf"/>
</dbReference>
<dbReference type="PANTHER" id="PTHR46062">
    <property type="entry name" value="STEROL REGULATORY ELEMENT-BINDING PROTEIN"/>
    <property type="match status" value="1"/>
</dbReference>
<dbReference type="PANTHER" id="PTHR46062:SF3">
    <property type="entry name" value="STEROL REGULATORY ELEMENT-BINDING PROTEIN 2"/>
    <property type="match status" value="1"/>
</dbReference>
<dbReference type="Pfam" id="PF00010">
    <property type="entry name" value="HLH"/>
    <property type="match status" value="1"/>
</dbReference>
<dbReference type="SMART" id="SM00353">
    <property type="entry name" value="HLH"/>
    <property type="match status" value="1"/>
</dbReference>
<dbReference type="SUPFAM" id="SSF47459">
    <property type="entry name" value="HLH, helix-loop-helix DNA-binding domain"/>
    <property type="match status" value="1"/>
</dbReference>
<dbReference type="PROSITE" id="PS50888">
    <property type="entry name" value="BHLH"/>
    <property type="match status" value="1"/>
</dbReference>
<accession>A3KNA7</accession>
<proteinExistence type="evidence at protein level"/>
<sequence>MDASEFMDTMDPSLSELGDEFTLGDIDEMLQFVSNQVDFPDIFEDQMGGGATARTLPQAVPSAILTPPHTPVQTSSQTHTQTLTQAHTQTHTQTHTQTRTPPVLQPRPQPITQVQTQTFPMQTLAVQTQAQPQTVMITPTATPSRFIQNQVICQQNNATSFQVLQPQMQSIMTSPQVQPMTIQHQRVLTPAGQTIQTLSTAPTTVHTMSQQVPVLVHQPQILKTDSLLLTTKPDGTQVLSTVQSPTGITTLTTPIQTTALQMPTLMSSNILTTVPVVMGGGDKLPIKQLSSGPAHNIGGARVGVEQSPVVGPGGVVKEGERRTTHNIIEKRYRSSINDKILELRDLVLGNDAKMHKSGVLRKAIDYIKYLQQVNHKLRQENLTLKMANQKNKSACVSDVDLELKAEVSLISPPPSDSGSSSPAQLSPYCIDSEPGSPLLEHEQLKSEPDSPSCVGVMDRSRLLLCALSFLCLSLNPLPSLLGAEAPAGSPEVAGHGPTRTLFSLPAQTQSFGAWLWCVLPFLLVWVVSGVGVVWGCVRVLYLWEPVTPLHSPTSVRFWRHRKQADLQLYRGDYAGAVLSLQTCLSVLSRVLPVTTLDIMCSLSWNLIRYCLRRPAPLGWLVRLVGGRHEGEESQTSSRDAALVYHKLSQLQLTGQMERRPLWGVCVSLSAVNLCESAEGKLTATQQVQVYVTAAISVRAALGKHLTCLPAYLLSCAEALTCQSDSKPLPDCLRWIFTPLGRQFFLSCDWSVRSESDGQIFTSARDKADPIAQLHRCFCQKLLERATHTLIEPQSREDAGEFTGVLEFLQLLNSCTEDSAPSTAPFPALANQSSTSVRDPVCRWWASVLTAAVHWLQGDDASVRSLLAEAERMPRALHTLDHPLPKAVLALCKAVQMSVCPQKGEGVVSCLSHCQRASAQLHISVCQSHNNTWLHKGVELLVCDLLLTLRTSLWQRGGGSNGEPGPAPGSQLSGFQRDLSSLRRLGQAHRQAQHKLFLHETTVRLMAGASPTRTHQLLRHRTHNYTTTDGECVLGERERAHAILLACRHLPLPLLTPPGHRARLLAEAKRTLERVGDRRSLQDCQHILLRLSGGTTIAAS</sequence>
<keyword id="KW-0010">Activator</keyword>
<keyword id="KW-0153">Cholesterol metabolism</keyword>
<keyword id="KW-0968">Cytoplasmic vesicle</keyword>
<keyword id="KW-0238">DNA-binding</keyword>
<keyword id="KW-0256">Endoplasmic reticulum</keyword>
<keyword id="KW-0333">Golgi apparatus</keyword>
<keyword id="KW-0443">Lipid metabolism</keyword>
<keyword id="KW-0472">Membrane</keyword>
<keyword id="KW-0539">Nucleus</keyword>
<keyword id="KW-1185">Reference proteome</keyword>
<keyword id="KW-0753">Steroid metabolism</keyword>
<keyword id="KW-1207">Sterol metabolism</keyword>
<keyword id="KW-0804">Transcription</keyword>
<keyword id="KW-0805">Transcription regulation</keyword>
<keyword id="KW-0812">Transmembrane</keyword>
<keyword id="KW-1133">Transmembrane helix</keyword>
<name>SRBP2_DANRE</name>
<reference evidence="10" key="1">
    <citation type="submission" date="2007-03" db="EMBL/GenBank/DDBJ databases">
        <authorList>
            <consortium name="NIH - Zebrafish Gene Collection (ZGC) project"/>
        </authorList>
    </citation>
    <scope>NUCLEOTIDE SEQUENCE [LARGE SCALE MRNA]</scope>
    <source>
        <tissue evidence="10">Embryo</tissue>
    </source>
</reference>
<reference key="2">
    <citation type="journal article" date="2019" name="Science">
        <title>AIBP-mediated cholesterol efflux instructs hematopoietic stem and progenitor cell fate.</title>
        <authorList>
            <person name="Gu Q."/>
            <person name="Yang X."/>
            <person name="Lv J."/>
            <person name="Zhang J."/>
            <person name="Xia B."/>
            <person name="Kim J.D."/>
            <person name="Wang R."/>
            <person name="Xiong F."/>
            <person name="Meng S."/>
            <person name="Clements T.P."/>
            <person name="Tandon B."/>
            <person name="Wagner D.S."/>
            <person name="Diaz M.F."/>
            <person name="Wenzel P.L."/>
            <person name="Miller Y.I."/>
            <person name="Traver D."/>
            <person name="Cooke J.P."/>
            <person name="Li W."/>
            <person name="Zon L.I."/>
            <person name="Chen K."/>
            <person name="Bai Y."/>
            <person name="Fang L."/>
        </authorList>
    </citation>
    <scope>FUNCTION</scope>
    <scope>PROTEOLYTIC CLEAVAGE</scope>
</reference>
<organism>
    <name type="scientific">Danio rerio</name>
    <name type="common">Zebrafish</name>
    <name type="synonym">Brachydanio rerio</name>
    <dbReference type="NCBI Taxonomy" id="7955"/>
    <lineage>
        <taxon>Eukaryota</taxon>
        <taxon>Metazoa</taxon>
        <taxon>Chordata</taxon>
        <taxon>Craniata</taxon>
        <taxon>Vertebrata</taxon>
        <taxon>Euteleostomi</taxon>
        <taxon>Actinopterygii</taxon>
        <taxon>Neopterygii</taxon>
        <taxon>Teleostei</taxon>
        <taxon>Ostariophysi</taxon>
        <taxon>Cypriniformes</taxon>
        <taxon>Danionidae</taxon>
        <taxon>Danioninae</taxon>
        <taxon>Danio</taxon>
    </lineage>
</organism>
<protein>
    <recommendedName>
        <fullName evidence="8">Sterol regulatory element-binding protein 2</fullName>
        <shortName evidence="8">SREBP-2</shortName>
    </recommendedName>
    <alternativeName>
        <fullName evidence="8">Sterol regulatory element-binding transcription factor 2</fullName>
    </alternativeName>
    <component>
        <recommendedName>
            <fullName evidence="9">Processed sterol regulatory element-binding protein 2</fullName>
        </recommendedName>
        <alternativeName>
            <fullName evidence="9">Transcription factor SREBF2</fullName>
        </alternativeName>
    </component>
</protein>
<feature type="chain" id="PRO_0000317063" description="Sterol regulatory element-binding protein 2">
    <location>
        <begin position="1"/>
        <end position="1099"/>
    </location>
</feature>
<feature type="chain" id="PRO_0000317064" description="Processed sterol regulatory element-binding protein 2" evidence="2">
    <location>
        <begin position="1"/>
        <end position="464"/>
    </location>
</feature>
<feature type="topological domain" description="Cytoplasmic" evidence="4">
    <location>
        <begin position="1"/>
        <end position="461"/>
    </location>
</feature>
<feature type="transmembrane region" description="Helical" evidence="4">
    <location>
        <begin position="462"/>
        <end position="482"/>
    </location>
</feature>
<feature type="topological domain" description="Lumenal" evidence="4">
    <location>
        <begin position="483"/>
        <end position="513"/>
    </location>
</feature>
<feature type="transmembrane region" description="Helical" evidence="4">
    <location>
        <begin position="514"/>
        <end position="534"/>
    </location>
</feature>
<feature type="topological domain" description="Cytoplasmic" evidence="4">
    <location>
        <begin position="535"/>
        <end position="1099"/>
    </location>
</feature>
<feature type="domain" description="bHLH" evidence="5">
    <location>
        <begin position="320"/>
        <end position="370"/>
    </location>
</feature>
<feature type="region of interest" description="Transcriptional activation (acidic)" evidence="1 2">
    <location>
        <begin position="1"/>
        <end position="47"/>
    </location>
</feature>
<feature type="region of interest" description="Disordered" evidence="6">
    <location>
        <begin position="65"/>
        <end position="107"/>
    </location>
</feature>
<feature type="region of interest" description="Leucine-zipper">
    <location>
        <begin position="370"/>
        <end position="391"/>
    </location>
</feature>
<feature type="compositionally biased region" description="Low complexity" evidence="6">
    <location>
        <begin position="71"/>
        <end position="100"/>
    </location>
</feature>
<feature type="site" description="Cleavage; by MBTPS2" evidence="2">
    <location>
        <begin position="464"/>
        <end position="465"/>
    </location>
</feature>
<feature type="site" description="Cleavage; by MBTPS1" evidence="2">
    <location>
        <begin position="502"/>
        <end position="503"/>
    </location>
</feature>